<keyword id="KW-0963">Cytoplasm</keyword>
<keyword id="KW-0312">Gluconeogenesis</keyword>
<keyword id="KW-0324">Glycolysis</keyword>
<keyword id="KW-0413">Isomerase</keyword>
<feature type="chain" id="PRO_1000013980" description="Glucose-6-phosphate isomerase">
    <location>
        <begin position="1"/>
        <end position="448"/>
    </location>
</feature>
<feature type="active site" description="Proton donor" evidence="1">
    <location>
        <position position="290"/>
    </location>
</feature>
<feature type="active site" evidence="1">
    <location>
        <position position="311"/>
    </location>
</feature>
<feature type="active site" evidence="1">
    <location>
        <position position="425"/>
    </location>
</feature>
<sequence>MAHIKFDYSKLTPFVAENELDEIQWQIDGAAKLLHEGKGAGSDYIGWLDLPEDYDKEEFARIQKAAKKIQSDSEVLIVIGIGGSYLGARAAIDFLSNSFVNLQTAEERKAPRILYAGNSISSSYLADLVDYVADKDFSVNVISKSGTTTEPAIAFRVFEEMLVKKYGREEANKRIYATTDKEKGAVKVNADANNWETFVVPDSVGGRFSVLTAVGLLPIAASGADITALMEGANAARKEYTSTNVHENDAYAYAALRNILYRKGKFSEILINYEPSLQYFSEWWKQLAGESEGKDQKGIYPTSANFSTDLHSLGQWIQEGTRTVFETAIRIEKPRKNINIPELDADLDGLGYLQGKDVDFVNKKAADGVLLAHTDGNVPNMIVTLPEQDEFTLGYAIYFFELAIGVSGYLNGINPFNQPGVEAYKKNMFALLGKPGFEELSKELNDRL</sequence>
<comment type="function">
    <text evidence="1">Catalyzes the reversible isomerization of glucose-6-phosphate to fructose-6-phosphate.</text>
</comment>
<comment type="catalytic activity">
    <reaction evidence="1">
        <text>alpha-D-glucose 6-phosphate = beta-D-fructose 6-phosphate</text>
        <dbReference type="Rhea" id="RHEA:11816"/>
        <dbReference type="ChEBI" id="CHEBI:57634"/>
        <dbReference type="ChEBI" id="CHEBI:58225"/>
        <dbReference type="EC" id="5.3.1.9"/>
    </reaction>
</comment>
<comment type="pathway">
    <text evidence="1">Carbohydrate biosynthesis; gluconeogenesis.</text>
</comment>
<comment type="pathway">
    <text evidence="1">Carbohydrate degradation; glycolysis; D-glyceraldehyde 3-phosphate and glycerone phosphate from D-glucose: step 2/4.</text>
</comment>
<comment type="subcellular location">
    <subcellularLocation>
        <location evidence="1">Cytoplasm</location>
    </subcellularLocation>
</comment>
<comment type="similarity">
    <text evidence="1">Belongs to the GPI family.</text>
</comment>
<name>G6PI_LACLM</name>
<gene>
    <name evidence="1" type="primary">pgi</name>
    <name type="ordered locus">llmg_2448</name>
</gene>
<organism>
    <name type="scientific">Lactococcus lactis subsp. cremoris (strain MG1363)</name>
    <dbReference type="NCBI Taxonomy" id="416870"/>
    <lineage>
        <taxon>Bacteria</taxon>
        <taxon>Bacillati</taxon>
        <taxon>Bacillota</taxon>
        <taxon>Bacilli</taxon>
        <taxon>Lactobacillales</taxon>
        <taxon>Streptococcaceae</taxon>
        <taxon>Lactococcus</taxon>
        <taxon>Lactococcus cremoris subsp. cremoris</taxon>
    </lineage>
</organism>
<accession>A2RNW8</accession>
<protein>
    <recommendedName>
        <fullName evidence="1">Glucose-6-phosphate isomerase</fullName>
        <shortName evidence="1">GPI</shortName>
        <ecNumber evidence="1">5.3.1.9</ecNumber>
    </recommendedName>
    <alternativeName>
        <fullName evidence="1">Phosphoglucose isomerase</fullName>
        <shortName evidence="1">PGI</shortName>
    </alternativeName>
    <alternativeName>
        <fullName evidence="1">Phosphohexose isomerase</fullName>
        <shortName evidence="1">PHI</shortName>
    </alternativeName>
</protein>
<proteinExistence type="inferred from homology"/>
<reference key="1">
    <citation type="journal article" date="2007" name="J. Bacteriol.">
        <title>The complete genome sequence of the lactic acid bacterial paradigm Lactococcus lactis subsp. cremoris MG1363.</title>
        <authorList>
            <person name="Wegmann U."/>
            <person name="O'Connell-Motherway M."/>
            <person name="Zomer A."/>
            <person name="Buist G."/>
            <person name="Shearman C."/>
            <person name="Canchaya C."/>
            <person name="Ventura M."/>
            <person name="Goesmann A."/>
            <person name="Gasson M.J."/>
            <person name="Kuipers O.P."/>
            <person name="van Sinderen D."/>
            <person name="Kok J."/>
        </authorList>
    </citation>
    <scope>NUCLEOTIDE SEQUENCE [LARGE SCALE GENOMIC DNA]</scope>
    <source>
        <strain>MG1363</strain>
    </source>
</reference>
<dbReference type="EC" id="5.3.1.9" evidence="1"/>
<dbReference type="EMBL" id="AM406671">
    <property type="protein sequence ID" value="CAL99013.1"/>
    <property type="molecule type" value="Genomic_DNA"/>
</dbReference>
<dbReference type="RefSeq" id="WP_010906353.1">
    <property type="nucleotide sequence ID" value="NZ_WJVF01000019.1"/>
</dbReference>
<dbReference type="SMR" id="A2RNW8"/>
<dbReference type="STRING" id="416870.llmg_2448"/>
<dbReference type="KEGG" id="llm:llmg_2448"/>
<dbReference type="eggNOG" id="COG0166">
    <property type="taxonomic scope" value="Bacteria"/>
</dbReference>
<dbReference type="HOGENOM" id="CLU_037303_0_1_9"/>
<dbReference type="OrthoDB" id="140919at2"/>
<dbReference type="PhylomeDB" id="A2RNW8"/>
<dbReference type="UniPathway" id="UPA00109">
    <property type="reaction ID" value="UER00181"/>
</dbReference>
<dbReference type="UniPathway" id="UPA00138"/>
<dbReference type="Proteomes" id="UP000000364">
    <property type="component" value="Chromosome"/>
</dbReference>
<dbReference type="GO" id="GO:0005829">
    <property type="term" value="C:cytosol"/>
    <property type="evidence" value="ECO:0007669"/>
    <property type="project" value="TreeGrafter"/>
</dbReference>
<dbReference type="GO" id="GO:0097367">
    <property type="term" value="F:carbohydrate derivative binding"/>
    <property type="evidence" value="ECO:0007669"/>
    <property type="project" value="InterPro"/>
</dbReference>
<dbReference type="GO" id="GO:0004347">
    <property type="term" value="F:glucose-6-phosphate isomerase activity"/>
    <property type="evidence" value="ECO:0007669"/>
    <property type="project" value="UniProtKB-UniRule"/>
</dbReference>
<dbReference type="GO" id="GO:0048029">
    <property type="term" value="F:monosaccharide binding"/>
    <property type="evidence" value="ECO:0007669"/>
    <property type="project" value="TreeGrafter"/>
</dbReference>
<dbReference type="GO" id="GO:0006094">
    <property type="term" value="P:gluconeogenesis"/>
    <property type="evidence" value="ECO:0007669"/>
    <property type="project" value="UniProtKB-UniRule"/>
</dbReference>
<dbReference type="GO" id="GO:0051156">
    <property type="term" value="P:glucose 6-phosphate metabolic process"/>
    <property type="evidence" value="ECO:0007669"/>
    <property type="project" value="TreeGrafter"/>
</dbReference>
<dbReference type="GO" id="GO:0006096">
    <property type="term" value="P:glycolytic process"/>
    <property type="evidence" value="ECO:0007669"/>
    <property type="project" value="UniProtKB-UniRule"/>
</dbReference>
<dbReference type="CDD" id="cd05015">
    <property type="entry name" value="SIS_PGI_1"/>
    <property type="match status" value="1"/>
</dbReference>
<dbReference type="CDD" id="cd05016">
    <property type="entry name" value="SIS_PGI_2"/>
    <property type="match status" value="1"/>
</dbReference>
<dbReference type="FunFam" id="3.40.50.10490:FF:000015">
    <property type="entry name" value="Glucose-6-phosphate isomerase"/>
    <property type="match status" value="1"/>
</dbReference>
<dbReference type="FunFam" id="3.40.50.10490:FF:000016">
    <property type="entry name" value="Glucose-6-phosphate isomerase"/>
    <property type="match status" value="1"/>
</dbReference>
<dbReference type="Gene3D" id="3.40.50.10490">
    <property type="entry name" value="Glucose-6-phosphate isomerase like protein, domain 1"/>
    <property type="match status" value="3"/>
</dbReference>
<dbReference type="HAMAP" id="MF_00473">
    <property type="entry name" value="G6P_isomerase"/>
    <property type="match status" value="1"/>
</dbReference>
<dbReference type="InterPro" id="IPR001672">
    <property type="entry name" value="G6P_Isomerase"/>
</dbReference>
<dbReference type="InterPro" id="IPR018189">
    <property type="entry name" value="Phosphoglucose_isomerase_CS"/>
</dbReference>
<dbReference type="InterPro" id="IPR046348">
    <property type="entry name" value="SIS_dom_sf"/>
</dbReference>
<dbReference type="InterPro" id="IPR035476">
    <property type="entry name" value="SIS_PGI_1"/>
</dbReference>
<dbReference type="InterPro" id="IPR035482">
    <property type="entry name" value="SIS_PGI_2"/>
</dbReference>
<dbReference type="NCBIfam" id="NF010697">
    <property type="entry name" value="PRK14097.1"/>
    <property type="match status" value="1"/>
</dbReference>
<dbReference type="PANTHER" id="PTHR11469">
    <property type="entry name" value="GLUCOSE-6-PHOSPHATE ISOMERASE"/>
    <property type="match status" value="1"/>
</dbReference>
<dbReference type="PANTHER" id="PTHR11469:SF1">
    <property type="entry name" value="GLUCOSE-6-PHOSPHATE ISOMERASE"/>
    <property type="match status" value="1"/>
</dbReference>
<dbReference type="Pfam" id="PF00342">
    <property type="entry name" value="PGI"/>
    <property type="match status" value="1"/>
</dbReference>
<dbReference type="PRINTS" id="PR00662">
    <property type="entry name" value="G6PISOMERASE"/>
</dbReference>
<dbReference type="SUPFAM" id="SSF53697">
    <property type="entry name" value="SIS domain"/>
    <property type="match status" value="1"/>
</dbReference>
<dbReference type="PROSITE" id="PS00765">
    <property type="entry name" value="P_GLUCOSE_ISOMERASE_1"/>
    <property type="match status" value="1"/>
</dbReference>
<dbReference type="PROSITE" id="PS00174">
    <property type="entry name" value="P_GLUCOSE_ISOMERASE_2"/>
    <property type="match status" value="1"/>
</dbReference>
<dbReference type="PROSITE" id="PS51463">
    <property type="entry name" value="P_GLUCOSE_ISOMERASE_3"/>
    <property type="match status" value="1"/>
</dbReference>
<evidence type="ECO:0000255" key="1">
    <source>
        <dbReference type="HAMAP-Rule" id="MF_00473"/>
    </source>
</evidence>